<protein>
    <recommendedName>
        <fullName evidence="1">Isoleucine--tRNA ligase</fullName>
        <ecNumber evidence="1">6.1.1.5</ecNumber>
    </recommendedName>
    <alternativeName>
        <fullName evidence="1">Isoleucyl-tRNA synthetase</fullName>
        <shortName evidence="1">IleRS</shortName>
    </alternativeName>
</protein>
<gene>
    <name evidence="1" type="primary">ileS</name>
    <name type="ordered locus">SAV1193</name>
</gene>
<keyword id="KW-0030">Aminoacyl-tRNA synthetase</keyword>
<keyword id="KW-0067">ATP-binding</keyword>
<keyword id="KW-0963">Cytoplasm</keyword>
<keyword id="KW-0436">Ligase</keyword>
<keyword id="KW-0479">Metal-binding</keyword>
<keyword id="KW-0547">Nucleotide-binding</keyword>
<keyword id="KW-0648">Protein biosynthesis</keyword>
<keyword id="KW-0862">Zinc</keyword>
<sequence length="917" mass="104886">MDYKETLLMPKTDFPMRGGLPNKEPQIQEKWDAEDQYHKALEKNKGNETFILHDGPPYANGNLHMGHALNKILKDFIVRYKTMQGFYAPYVPGWDTHGLPIEQALTKKGVDRKKMSTAEFREKCKEFALEQIELQKKDFRRLGVRGDFNDPYITLKPEYEAAQIRIFGEMADKGLIYKGKKPVYWSPSSESSLAEAEIEYHDKRSASIYVAFDVKDDKGVVDADAKFIIWTTTPWTIPSNVAITVHPELKYGQYNVNGEKYIIAEALSDAVAEALDWDKASIKLEKEYTGKELEYVVAQHPFLDRESLVINGDHVTTDAGTGCVHTAPGHGEDDYIVGQKYELPVISPIDDKGVFTEEGGQFEGMFYDKANKAVTDLLTEKGALLKLDFITHSYPHDWRTKKPVIFRATPQWFASISKVRQDILDAIENTNFKVNWGKTRIYNMVRDRGEWVISRQRVWGVPLPVFYAENGEIIMTKETVNHVADLFAEHGSNIWFEREAKDLLPEGFTHPGSPNGTFTKETDIMDVWFDSGSSHRGVLETRPELSFPADMYLEGSDQYRGWFNSSITTSVATRGVSPYKFLLSHGFVMDGEGKKMSKSLGNVIVPDQVVKQKGADIARLWVSSTDYLADVRISDEILKQTSDVYRKIRNTLRFMLGNINDFNPDTDSIPESELLEVDRYLLNRLREFTASTINNYENFDYLNIYQEVQNFINVELSNFYLDYGKDILYIEQRDSHIRRSMQTVLYQILVDMTKLLAPILVHTAEEVWSHTPHVKEESVHLADMPKVVEVDQALLDKWRTFMNLRDDVNRALETARNEKVIGKSLEAKVTIASNDKFNASEFLTSFDALHQLFIVSQVKVVDKLDDQATAYEHGDIVIEHADGEKCERCWNYSEDLGAVDELTHLCPRCQQVVKSLV</sequence>
<evidence type="ECO:0000255" key="1">
    <source>
        <dbReference type="HAMAP-Rule" id="MF_02002"/>
    </source>
</evidence>
<organism>
    <name type="scientific">Staphylococcus aureus (strain Mu50 / ATCC 700699)</name>
    <dbReference type="NCBI Taxonomy" id="158878"/>
    <lineage>
        <taxon>Bacteria</taxon>
        <taxon>Bacillati</taxon>
        <taxon>Bacillota</taxon>
        <taxon>Bacilli</taxon>
        <taxon>Bacillales</taxon>
        <taxon>Staphylococcaceae</taxon>
        <taxon>Staphylococcus</taxon>
    </lineage>
</organism>
<proteinExistence type="inferred from homology"/>
<feature type="chain" id="PRO_0000098467" description="Isoleucine--tRNA ligase">
    <location>
        <begin position="1"/>
        <end position="917"/>
    </location>
</feature>
<feature type="short sequence motif" description="'HIGH' region">
    <location>
        <begin position="57"/>
        <end position="67"/>
    </location>
</feature>
<feature type="short sequence motif" description="'KMSKS' region">
    <location>
        <begin position="595"/>
        <end position="599"/>
    </location>
</feature>
<feature type="binding site" evidence="1">
    <location>
        <position position="554"/>
    </location>
    <ligand>
        <name>L-isoleucyl-5'-AMP</name>
        <dbReference type="ChEBI" id="CHEBI:178002"/>
    </ligand>
</feature>
<feature type="binding site" evidence="1">
    <location>
        <position position="598"/>
    </location>
    <ligand>
        <name>ATP</name>
        <dbReference type="ChEBI" id="CHEBI:30616"/>
    </ligand>
</feature>
<feature type="binding site" evidence="1">
    <location>
        <position position="886"/>
    </location>
    <ligand>
        <name>Zn(2+)</name>
        <dbReference type="ChEBI" id="CHEBI:29105"/>
    </ligand>
</feature>
<feature type="binding site" evidence="1">
    <location>
        <position position="889"/>
    </location>
    <ligand>
        <name>Zn(2+)</name>
        <dbReference type="ChEBI" id="CHEBI:29105"/>
    </ligand>
</feature>
<feature type="binding site" evidence="1">
    <location>
        <position position="906"/>
    </location>
    <ligand>
        <name>Zn(2+)</name>
        <dbReference type="ChEBI" id="CHEBI:29105"/>
    </ligand>
</feature>
<feature type="binding site" evidence="1">
    <location>
        <position position="909"/>
    </location>
    <ligand>
        <name>Zn(2+)</name>
        <dbReference type="ChEBI" id="CHEBI:29105"/>
    </ligand>
</feature>
<accession>P67508</accession>
<accession>Q99US4</accession>
<dbReference type="EC" id="6.1.1.5" evidence="1"/>
<dbReference type="EMBL" id="BA000017">
    <property type="protein sequence ID" value="BAB57355.1"/>
    <property type="molecule type" value="Genomic_DNA"/>
</dbReference>
<dbReference type="RefSeq" id="WP_000384691.1">
    <property type="nucleotide sequence ID" value="NC_002758.2"/>
</dbReference>
<dbReference type="SMR" id="P67508"/>
<dbReference type="KEGG" id="sav:SAV1193"/>
<dbReference type="HOGENOM" id="CLU_001493_7_1_9"/>
<dbReference type="PhylomeDB" id="P67508"/>
<dbReference type="Proteomes" id="UP000002481">
    <property type="component" value="Chromosome"/>
</dbReference>
<dbReference type="GO" id="GO:0005829">
    <property type="term" value="C:cytosol"/>
    <property type="evidence" value="ECO:0007669"/>
    <property type="project" value="TreeGrafter"/>
</dbReference>
<dbReference type="GO" id="GO:0002161">
    <property type="term" value="F:aminoacyl-tRNA deacylase activity"/>
    <property type="evidence" value="ECO:0007669"/>
    <property type="project" value="InterPro"/>
</dbReference>
<dbReference type="GO" id="GO:0005524">
    <property type="term" value="F:ATP binding"/>
    <property type="evidence" value="ECO:0007669"/>
    <property type="project" value="UniProtKB-UniRule"/>
</dbReference>
<dbReference type="GO" id="GO:0004822">
    <property type="term" value="F:isoleucine-tRNA ligase activity"/>
    <property type="evidence" value="ECO:0007669"/>
    <property type="project" value="UniProtKB-UniRule"/>
</dbReference>
<dbReference type="GO" id="GO:0000049">
    <property type="term" value="F:tRNA binding"/>
    <property type="evidence" value="ECO:0007669"/>
    <property type="project" value="InterPro"/>
</dbReference>
<dbReference type="GO" id="GO:0008270">
    <property type="term" value="F:zinc ion binding"/>
    <property type="evidence" value="ECO:0007669"/>
    <property type="project" value="UniProtKB-UniRule"/>
</dbReference>
<dbReference type="GO" id="GO:0006428">
    <property type="term" value="P:isoleucyl-tRNA aminoacylation"/>
    <property type="evidence" value="ECO:0007669"/>
    <property type="project" value="UniProtKB-UniRule"/>
</dbReference>
<dbReference type="CDD" id="cd07960">
    <property type="entry name" value="Anticodon_Ia_Ile_BEm"/>
    <property type="match status" value="1"/>
</dbReference>
<dbReference type="CDD" id="cd00818">
    <property type="entry name" value="IleRS_core"/>
    <property type="match status" value="1"/>
</dbReference>
<dbReference type="FunFam" id="1.10.10.830:FF:000001">
    <property type="entry name" value="Isoleucine--tRNA ligase"/>
    <property type="match status" value="1"/>
</dbReference>
<dbReference type="FunFam" id="1.10.730.20:FF:000001">
    <property type="entry name" value="Isoleucine--tRNA ligase"/>
    <property type="match status" value="1"/>
</dbReference>
<dbReference type="FunFam" id="3.40.50.620:FF:000152">
    <property type="entry name" value="Isoleucine--tRNA ligase"/>
    <property type="match status" value="1"/>
</dbReference>
<dbReference type="FunFam" id="3.90.740.10:FF:000006">
    <property type="entry name" value="Isoleucine--tRNA ligase"/>
    <property type="match status" value="1"/>
</dbReference>
<dbReference type="Gene3D" id="1.10.730.20">
    <property type="match status" value="1"/>
</dbReference>
<dbReference type="Gene3D" id="3.40.50.620">
    <property type="entry name" value="HUPs"/>
    <property type="match status" value="2"/>
</dbReference>
<dbReference type="Gene3D" id="1.10.10.830">
    <property type="entry name" value="Ile-tRNA synthetase CP2 domain-like"/>
    <property type="match status" value="1"/>
</dbReference>
<dbReference type="HAMAP" id="MF_02002">
    <property type="entry name" value="Ile_tRNA_synth_type1"/>
    <property type="match status" value="1"/>
</dbReference>
<dbReference type="InterPro" id="IPR001412">
    <property type="entry name" value="aa-tRNA-synth_I_CS"/>
</dbReference>
<dbReference type="InterPro" id="IPR002300">
    <property type="entry name" value="aa-tRNA-synth_Ia"/>
</dbReference>
<dbReference type="InterPro" id="IPR033708">
    <property type="entry name" value="Anticodon_Ile_BEm"/>
</dbReference>
<dbReference type="InterPro" id="IPR002301">
    <property type="entry name" value="Ile-tRNA-ligase"/>
</dbReference>
<dbReference type="InterPro" id="IPR023585">
    <property type="entry name" value="Ile-tRNA-ligase_type1"/>
</dbReference>
<dbReference type="InterPro" id="IPR050081">
    <property type="entry name" value="Ile-tRNA_ligase"/>
</dbReference>
<dbReference type="InterPro" id="IPR013155">
    <property type="entry name" value="M/V/L/I-tRNA-synth_anticd-bd"/>
</dbReference>
<dbReference type="InterPro" id="IPR014729">
    <property type="entry name" value="Rossmann-like_a/b/a_fold"/>
</dbReference>
<dbReference type="InterPro" id="IPR009080">
    <property type="entry name" value="tRNAsynth_Ia_anticodon-bd"/>
</dbReference>
<dbReference type="InterPro" id="IPR009008">
    <property type="entry name" value="Val/Leu/Ile-tRNA-synth_edit"/>
</dbReference>
<dbReference type="InterPro" id="IPR010663">
    <property type="entry name" value="Znf_FPG/IleRS"/>
</dbReference>
<dbReference type="NCBIfam" id="TIGR00392">
    <property type="entry name" value="ileS"/>
    <property type="match status" value="1"/>
</dbReference>
<dbReference type="PANTHER" id="PTHR42765:SF1">
    <property type="entry name" value="ISOLEUCINE--TRNA LIGASE, MITOCHONDRIAL"/>
    <property type="match status" value="1"/>
</dbReference>
<dbReference type="PANTHER" id="PTHR42765">
    <property type="entry name" value="SOLEUCYL-TRNA SYNTHETASE"/>
    <property type="match status" value="1"/>
</dbReference>
<dbReference type="Pfam" id="PF08264">
    <property type="entry name" value="Anticodon_1"/>
    <property type="match status" value="1"/>
</dbReference>
<dbReference type="Pfam" id="PF00133">
    <property type="entry name" value="tRNA-synt_1"/>
    <property type="match status" value="1"/>
</dbReference>
<dbReference type="Pfam" id="PF06827">
    <property type="entry name" value="zf-FPG_IleRS"/>
    <property type="match status" value="1"/>
</dbReference>
<dbReference type="PRINTS" id="PR00984">
    <property type="entry name" value="TRNASYNTHILE"/>
</dbReference>
<dbReference type="SUPFAM" id="SSF47323">
    <property type="entry name" value="Anticodon-binding domain of a subclass of class I aminoacyl-tRNA synthetases"/>
    <property type="match status" value="1"/>
</dbReference>
<dbReference type="SUPFAM" id="SSF52374">
    <property type="entry name" value="Nucleotidylyl transferase"/>
    <property type="match status" value="1"/>
</dbReference>
<dbReference type="SUPFAM" id="SSF50677">
    <property type="entry name" value="ValRS/IleRS/LeuRS editing domain"/>
    <property type="match status" value="1"/>
</dbReference>
<dbReference type="PROSITE" id="PS00178">
    <property type="entry name" value="AA_TRNA_LIGASE_I"/>
    <property type="match status" value="1"/>
</dbReference>
<comment type="function">
    <text evidence="1">Catalyzes the attachment of isoleucine to tRNA(Ile). As IleRS can inadvertently accommodate and process structurally similar amino acids such as valine, to avoid such errors it has two additional distinct tRNA(Ile)-dependent editing activities. One activity is designated as 'pretransfer' editing and involves the hydrolysis of activated Val-AMP. The other activity is designated 'posttransfer' editing and involves deacylation of mischarged Val-tRNA(Ile).</text>
</comment>
<comment type="catalytic activity">
    <reaction evidence="1">
        <text>tRNA(Ile) + L-isoleucine + ATP = L-isoleucyl-tRNA(Ile) + AMP + diphosphate</text>
        <dbReference type="Rhea" id="RHEA:11060"/>
        <dbReference type="Rhea" id="RHEA-COMP:9666"/>
        <dbReference type="Rhea" id="RHEA-COMP:9695"/>
        <dbReference type="ChEBI" id="CHEBI:30616"/>
        <dbReference type="ChEBI" id="CHEBI:33019"/>
        <dbReference type="ChEBI" id="CHEBI:58045"/>
        <dbReference type="ChEBI" id="CHEBI:78442"/>
        <dbReference type="ChEBI" id="CHEBI:78528"/>
        <dbReference type="ChEBI" id="CHEBI:456215"/>
        <dbReference type="EC" id="6.1.1.5"/>
    </reaction>
</comment>
<comment type="cofactor">
    <cofactor evidence="1">
        <name>Zn(2+)</name>
        <dbReference type="ChEBI" id="CHEBI:29105"/>
    </cofactor>
    <text evidence="1">Binds 1 zinc ion per subunit.</text>
</comment>
<comment type="subunit">
    <text evidence="1">Monomer.</text>
</comment>
<comment type="subcellular location">
    <subcellularLocation>
        <location evidence="1">Cytoplasm</location>
    </subcellularLocation>
</comment>
<comment type="domain">
    <text evidence="1">IleRS has two distinct active sites: one for aminoacylation and one for editing. The misactivated valine is translocated from the active site to the editing site, which sterically excludes the correctly activated isoleucine. The single editing site contains two valyl binding pockets, one specific for each substrate (Val-AMP or Val-tRNA(Ile)).</text>
</comment>
<comment type="similarity">
    <text evidence="1">Belongs to the class-I aminoacyl-tRNA synthetase family. IleS type 1 subfamily.</text>
</comment>
<reference key="1">
    <citation type="journal article" date="2001" name="Lancet">
        <title>Whole genome sequencing of meticillin-resistant Staphylococcus aureus.</title>
        <authorList>
            <person name="Kuroda M."/>
            <person name="Ohta T."/>
            <person name="Uchiyama I."/>
            <person name="Baba T."/>
            <person name="Yuzawa H."/>
            <person name="Kobayashi I."/>
            <person name="Cui L."/>
            <person name="Oguchi A."/>
            <person name="Aoki K."/>
            <person name="Nagai Y."/>
            <person name="Lian J.-Q."/>
            <person name="Ito T."/>
            <person name="Kanamori M."/>
            <person name="Matsumaru H."/>
            <person name="Maruyama A."/>
            <person name="Murakami H."/>
            <person name="Hosoyama A."/>
            <person name="Mizutani-Ui Y."/>
            <person name="Takahashi N.K."/>
            <person name="Sawano T."/>
            <person name="Inoue R."/>
            <person name="Kaito C."/>
            <person name="Sekimizu K."/>
            <person name="Hirakawa H."/>
            <person name="Kuhara S."/>
            <person name="Goto S."/>
            <person name="Yabuzaki J."/>
            <person name="Kanehisa M."/>
            <person name="Yamashita A."/>
            <person name="Oshima K."/>
            <person name="Furuya K."/>
            <person name="Yoshino C."/>
            <person name="Shiba T."/>
            <person name="Hattori M."/>
            <person name="Ogasawara N."/>
            <person name="Hayashi H."/>
            <person name="Hiramatsu K."/>
        </authorList>
    </citation>
    <scope>NUCLEOTIDE SEQUENCE [LARGE SCALE GENOMIC DNA]</scope>
    <source>
        <strain>Mu50 / ATCC 700699</strain>
    </source>
</reference>
<name>SYI_STAAM</name>